<proteinExistence type="inferred from homology"/>
<reference key="1">
    <citation type="journal article" date="2005" name="Nucleic Acids Res.">
        <title>Genome dynamics and diversity of Shigella species, the etiologic agents of bacillary dysentery.</title>
        <authorList>
            <person name="Yang F."/>
            <person name="Yang J."/>
            <person name="Zhang X."/>
            <person name="Chen L."/>
            <person name="Jiang Y."/>
            <person name="Yan Y."/>
            <person name="Tang X."/>
            <person name="Wang J."/>
            <person name="Xiong Z."/>
            <person name="Dong J."/>
            <person name="Xue Y."/>
            <person name="Zhu Y."/>
            <person name="Xu X."/>
            <person name="Sun L."/>
            <person name="Chen S."/>
            <person name="Nie H."/>
            <person name="Peng J."/>
            <person name="Xu J."/>
            <person name="Wang Y."/>
            <person name="Yuan Z."/>
            <person name="Wen Y."/>
            <person name="Yao Z."/>
            <person name="Shen Y."/>
            <person name="Qiang B."/>
            <person name="Hou Y."/>
            <person name="Yu J."/>
            <person name="Jin Q."/>
        </authorList>
    </citation>
    <scope>NUCLEOTIDE SEQUENCE [LARGE SCALE GENOMIC DNA]</scope>
    <source>
        <strain>Sd197</strain>
    </source>
</reference>
<feature type="chain" id="PRO_1000022024" description="Small heat shock protein IbpA">
    <location>
        <begin position="1"/>
        <end position="137"/>
    </location>
</feature>
<feature type="domain" description="sHSP" evidence="2">
    <location>
        <begin position="28"/>
        <end position="137"/>
    </location>
</feature>
<keyword id="KW-0143">Chaperone</keyword>
<keyword id="KW-0963">Cytoplasm</keyword>
<keyword id="KW-1185">Reference proteome</keyword>
<keyword id="KW-0346">Stress response</keyword>
<accession>Q329C6</accession>
<sequence>MRNFDLSPLYRSAIGFDRLFNHLENNQSQSNGGYPPYNVELVDENHYRIAIAVAGFAESELEITAQDNLLVVKGAHADEQKERTYLYQGIAERNFERKFQLAENIHVRGANLVNGLLYIDLERVIPEAKKPRRIEIN</sequence>
<gene>
    <name evidence="1" type="primary">ibpA</name>
    <name type="ordered locus">SDY_4173</name>
</gene>
<name>IBPA_SHIDS</name>
<organism>
    <name type="scientific">Shigella dysenteriae serotype 1 (strain Sd197)</name>
    <dbReference type="NCBI Taxonomy" id="300267"/>
    <lineage>
        <taxon>Bacteria</taxon>
        <taxon>Pseudomonadati</taxon>
        <taxon>Pseudomonadota</taxon>
        <taxon>Gammaproteobacteria</taxon>
        <taxon>Enterobacterales</taxon>
        <taxon>Enterobacteriaceae</taxon>
        <taxon>Shigella</taxon>
    </lineage>
</organism>
<comment type="function">
    <text evidence="1">Associates with aggregated proteins, together with IbpB, to stabilize and protect them from irreversible denaturation and extensive proteolysis during heat shock and oxidative stress. Aggregated proteins bound to the IbpAB complex are more efficiently refolded and reactivated by the ATP-dependent chaperone systems ClpB and DnaK/DnaJ/GrpE. Its activity is ATP-independent.</text>
</comment>
<comment type="subunit">
    <text evidence="1">Monomer. Forms homomultimers of about 100-150 subunits at optimal growth temperatures. Conformation changes to monomers at high temperatures or high ionic concentrations.</text>
</comment>
<comment type="subcellular location">
    <subcellularLocation>
        <location evidence="1">Cytoplasm</location>
    </subcellularLocation>
</comment>
<comment type="similarity">
    <text evidence="1 2">Belongs to the small heat shock protein (HSP20) family.</text>
</comment>
<dbReference type="EMBL" id="CP000034">
    <property type="protein sequence ID" value="ABB64079.1"/>
    <property type="molecule type" value="Genomic_DNA"/>
</dbReference>
<dbReference type="RefSeq" id="WP_001243437.1">
    <property type="nucleotide sequence ID" value="NC_007606.1"/>
</dbReference>
<dbReference type="RefSeq" id="YP_405570.1">
    <property type="nucleotide sequence ID" value="NC_007606.1"/>
</dbReference>
<dbReference type="SMR" id="Q329C6"/>
<dbReference type="STRING" id="300267.SDY_4173"/>
<dbReference type="EnsemblBacteria" id="ABB64079">
    <property type="protein sequence ID" value="ABB64079"/>
    <property type="gene ID" value="SDY_4173"/>
</dbReference>
<dbReference type="GeneID" id="93778428"/>
<dbReference type="KEGG" id="sdy:SDY_4173"/>
<dbReference type="PATRIC" id="fig|300267.13.peg.4907"/>
<dbReference type="HOGENOM" id="CLU_046737_4_2_6"/>
<dbReference type="Proteomes" id="UP000002716">
    <property type="component" value="Chromosome"/>
</dbReference>
<dbReference type="GO" id="GO:0005737">
    <property type="term" value="C:cytoplasm"/>
    <property type="evidence" value="ECO:0007669"/>
    <property type="project" value="UniProtKB-SubCell"/>
</dbReference>
<dbReference type="GO" id="GO:0050821">
    <property type="term" value="P:protein stabilization"/>
    <property type="evidence" value="ECO:0007669"/>
    <property type="project" value="UniProtKB-UniRule"/>
</dbReference>
<dbReference type="CDD" id="cd06470">
    <property type="entry name" value="ACD_IbpA-B_like"/>
    <property type="match status" value="1"/>
</dbReference>
<dbReference type="FunFam" id="2.60.40.790:FF:000002">
    <property type="entry name" value="Small heat shock protein IbpA"/>
    <property type="match status" value="1"/>
</dbReference>
<dbReference type="Gene3D" id="2.60.40.790">
    <property type="match status" value="1"/>
</dbReference>
<dbReference type="HAMAP" id="MF_02000">
    <property type="entry name" value="HSP20_IbpA"/>
    <property type="match status" value="1"/>
</dbReference>
<dbReference type="InterPro" id="IPR002068">
    <property type="entry name" value="A-crystallin/Hsp20_dom"/>
</dbReference>
<dbReference type="InterPro" id="IPR037913">
    <property type="entry name" value="ACD_IbpA/B"/>
</dbReference>
<dbReference type="InterPro" id="IPR008978">
    <property type="entry name" value="HSP20-like_chaperone"/>
</dbReference>
<dbReference type="InterPro" id="IPR023728">
    <property type="entry name" value="HSP20_IbpA"/>
</dbReference>
<dbReference type="NCBIfam" id="NF008013">
    <property type="entry name" value="PRK10743.1"/>
    <property type="match status" value="1"/>
</dbReference>
<dbReference type="PANTHER" id="PTHR47062">
    <property type="match status" value="1"/>
</dbReference>
<dbReference type="PANTHER" id="PTHR47062:SF1">
    <property type="entry name" value="SMALL HEAT SHOCK PROTEIN IBPA"/>
    <property type="match status" value="1"/>
</dbReference>
<dbReference type="Pfam" id="PF00011">
    <property type="entry name" value="HSP20"/>
    <property type="match status" value="1"/>
</dbReference>
<dbReference type="SUPFAM" id="SSF49764">
    <property type="entry name" value="HSP20-like chaperones"/>
    <property type="match status" value="1"/>
</dbReference>
<dbReference type="PROSITE" id="PS01031">
    <property type="entry name" value="SHSP"/>
    <property type="match status" value="1"/>
</dbReference>
<protein>
    <recommendedName>
        <fullName evidence="1">Small heat shock protein IbpA</fullName>
    </recommendedName>
    <alternativeName>
        <fullName evidence="1">16 kDa heat shock protein A</fullName>
    </alternativeName>
</protein>
<evidence type="ECO:0000255" key="1">
    <source>
        <dbReference type="HAMAP-Rule" id="MF_02000"/>
    </source>
</evidence>
<evidence type="ECO:0000255" key="2">
    <source>
        <dbReference type="PROSITE-ProRule" id="PRU00285"/>
    </source>
</evidence>